<protein>
    <recommendedName>
        <fullName evidence="2">Ascorbate-specific PTS system EIIB component</fullName>
        <ecNumber evidence="2">2.7.1.194</ecNumber>
    </recommendedName>
    <alternativeName>
        <fullName evidence="2">Ascorbate-specific phosphotransferase enzyme IIB component</fullName>
    </alternativeName>
</protein>
<sequence>MENKNLHIIAACGNGMGTSMLIKIKVEKIMKELGYTAKVEALSMGQTKGMEHSADIIISSIHLTSEFNPNAKAKIVGVLNLMDENEIKQALSKVL</sequence>
<proteinExistence type="evidence at protein level"/>
<reference key="1">
    <citation type="journal article" date="1996" name="Nucleic Acids Res.">
        <title>Complete sequence analysis of the genome of the bacterium Mycoplasma pneumoniae.</title>
        <authorList>
            <person name="Himmelreich R."/>
            <person name="Hilbert H."/>
            <person name="Plagens H."/>
            <person name="Pirkl E."/>
            <person name="Li B.-C."/>
            <person name="Herrmann R."/>
        </authorList>
    </citation>
    <scope>NUCLEOTIDE SEQUENCE [LARGE SCALE GENOMIC DNA]</scope>
    <source>
        <strain>ATCC 29342 / M129 / Subtype 1</strain>
    </source>
</reference>
<reference key="2">
    <citation type="journal article" date="2000" name="Nucleic Acids Res.">
        <title>Re-annotating the Mycoplasma pneumoniae genome sequence: adding value, function and reading frames.</title>
        <authorList>
            <person name="Dandekar T."/>
            <person name="Huynen M."/>
            <person name="Regula J.T."/>
            <person name="Ueberle B."/>
            <person name="Zimmermann C.U."/>
            <person name="Andrade M.A."/>
            <person name="Doerks T."/>
            <person name="Sanchez-Pulido L."/>
            <person name="Snel B."/>
            <person name="Suyama M."/>
            <person name="Yuan Y.P."/>
            <person name="Herrmann R."/>
            <person name="Bork P."/>
        </authorList>
    </citation>
    <scope>IDENTIFICATION</scope>
    <source>
        <strain>ATCC 29342 / M129 / Subtype 1</strain>
    </source>
</reference>
<reference key="3">
    <citation type="journal article" date="2000" name="Electrophoresis">
        <title>Towards a two-dimensional proteome map of Mycoplasma pneumoniae.</title>
        <authorList>
            <person name="Regula J.T."/>
            <person name="Ueberle B."/>
            <person name="Boguth G."/>
            <person name="Goerg A."/>
            <person name="Schnoelzer M."/>
            <person name="Herrmann R."/>
            <person name="Frank R."/>
        </authorList>
    </citation>
    <scope>IDENTIFICATION BY MASS SPECTROMETRY</scope>
    <source>
        <strain>ATCC 29342 / M129 / Subtype 1</strain>
    </source>
</reference>
<evidence type="ECO:0000250" key="1">
    <source>
        <dbReference type="UniProtKB" id="P00550"/>
    </source>
</evidence>
<evidence type="ECO:0000250" key="2">
    <source>
        <dbReference type="UniProtKB" id="P69822"/>
    </source>
</evidence>
<evidence type="ECO:0000255" key="3">
    <source>
        <dbReference type="PROSITE-ProRule" id="PRU00422"/>
    </source>
</evidence>
<evidence type="ECO:0000305" key="4"/>
<keyword id="KW-0963">Cytoplasm</keyword>
<keyword id="KW-0418">Kinase</keyword>
<keyword id="KW-0597">Phosphoprotein</keyword>
<keyword id="KW-0598">Phosphotransferase system</keyword>
<keyword id="KW-1185">Reference proteome</keyword>
<keyword id="KW-0808">Transferase</keyword>
<keyword id="KW-0813">Transport</keyword>
<feature type="chain" id="PRO_0000186688" description="Ascorbate-specific PTS system EIIB component">
    <location>
        <begin position="1"/>
        <end position="95"/>
    </location>
</feature>
<feature type="domain" description="PTS EIIB type-2" evidence="3">
    <location>
        <begin position="1"/>
        <end position="95"/>
    </location>
</feature>
<feature type="active site" description="Phosphocysteine intermediate" evidence="1 4">
    <location>
        <position position="12"/>
    </location>
</feature>
<feature type="modified residue" description="Phosphocysteine" evidence="1 4">
    <location>
        <position position="12"/>
    </location>
</feature>
<name>ULAB_MYCPN</name>
<accession>Q9EXD8</accession>
<comment type="function">
    <text evidence="2">The phosphoenolpyruvate-dependent sugar phosphotransferase system (sugar PTS), a major carbohydrate active transport system, catalyzes the phosphorylation of incoming sugar substrates concomitantly with their translocation across the cell membrane. The enzyme II UlaABC PTS system is involved in ascorbate transport.</text>
</comment>
<comment type="catalytic activity">
    <reaction evidence="2">
        <text>N(pros)-phospho-L-histidyl-[protein] + L-ascorbate(out) = L-ascorbate 6-phosphate(in) + L-histidyl-[protein]</text>
        <dbReference type="Rhea" id="RHEA:42436"/>
        <dbReference type="Rhea" id="RHEA-COMP:9745"/>
        <dbReference type="Rhea" id="RHEA-COMP:9746"/>
        <dbReference type="ChEBI" id="CHEBI:29979"/>
        <dbReference type="ChEBI" id="CHEBI:38290"/>
        <dbReference type="ChEBI" id="CHEBI:61698"/>
        <dbReference type="ChEBI" id="CHEBI:64837"/>
        <dbReference type="EC" id="2.7.1.194"/>
    </reaction>
</comment>
<comment type="subcellular location">
    <subcellularLocation>
        <location evidence="4">Cytoplasm</location>
    </subcellularLocation>
</comment>
<comment type="domain">
    <text evidence="3">The PTS EIIB type-2 domain is phosphorylated by phospho-EIIA on a cysteinyl residue. Then, it transfers the phosphoryl group to the sugar substrate concomitantly with the sugar uptake processed by the PTS EIIC type-2 domain.</text>
</comment>
<gene>
    <name type="primary">ulaB</name>
    <name type="synonym">sgaB</name>
    <name type="ordered locus">MPN_495</name>
    <name type="ORF">MP347.1</name>
</gene>
<organism>
    <name type="scientific">Mycoplasma pneumoniae (strain ATCC 29342 / M129 / Subtype 1)</name>
    <name type="common">Mycoplasmoides pneumoniae</name>
    <dbReference type="NCBI Taxonomy" id="272634"/>
    <lineage>
        <taxon>Bacteria</taxon>
        <taxon>Bacillati</taxon>
        <taxon>Mycoplasmatota</taxon>
        <taxon>Mycoplasmoidales</taxon>
        <taxon>Mycoplasmoidaceae</taxon>
        <taxon>Mycoplasmoides</taxon>
    </lineage>
</organism>
<dbReference type="EC" id="2.7.1.194" evidence="2"/>
<dbReference type="EMBL" id="U00089">
    <property type="protein sequence ID" value="AAG34743.1"/>
    <property type="molecule type" value="Genomic_DNA"/>
</dbReference>
<dbReference type="RefSeq" id="NP_110183.1">
    <property type="nucleotide sequence ID" value="NC_000912.1"/>
</dbReference>
<dbReference type="RefSeq" id="WP_010874851.1">
    <property type="nucleotide sequence ID" value="NZ_OU342337.1"/>
</dbReference>
<dbReference type="SMR" id="Q9EXD8"/>
<dbReference type="STRING" id="272634.MPN_495"/>
<dbReference type="EnsemblBacteria" id="AAG34743">
    <property type="protein sequence ID" value="AAG34743"/>
    <property type="gene ID" value="MPN_495"/>
</dbReference>
<dbReference type="KEGG" id="mpn:MPN_495"/>
<dbReference type="PATRIC" id="fig|272634.6.peg.535"/>
<dbReference type="HOGENOM" id="CLU_159248_1_0_14"/>
<dbReference type="OrthoDB" id="6603449at2"/>
<dbReference type="BioCyc" id="MPNE272634:G1GJ3-812-MONOMER"/>
<dbReference type="Proteomes" id="UP000000808">
    <property type="component" value="Chromosome"/>
</dbReference>
<dbReference type="GO" id="GO:0005737">
    <property type="term" value="C:cytoplasm"/>
    <property type="evidence" value="ECO:0007669"/>
    <property type="project" value="UniProtKB-SubCell"/>
</dbReference>
<dbReference type="GO" id="GO:0016301">
    <property type="term" value="F:kinase activity"/>
    <property type="evidence" value="ECO:0007669"/>
    <property type="project" value="UniProtKB-KW"/>
</dbReference>
<dbReference type="GO" id="GO:0008982">
    <property type="term" value="F:protein-N(PI)-phosphohistidine-sugar phosphotransferase activity"/>
    <property type="evidence" value="ECO:0007669"/>
    <property type="project" value="InterPro"/>
</dbReference>
<dbReference type="GO" id="GO:0009401">
    <property type="term" value="P:phosphoenolpyruvate-dependent sugar phosphotransferase system"/>
    <property type="evidence" value="ECO:0007669"/>
    <property type="project" value="UniProtKB-KW"/>
</dbReference>
<dbReference type="CDD" id="cd05563">
    <property type="entry name" value="PTS_IIB_ascorbate"/>
    <property type="match status" value="1"/>
</dbReference>
<dbReference type="Gene3D" id="3.40.50.2300">
    <property type="match status" value="1"/>
</dbReference>
<dbReference type="InterPro" id="IPR036095">
    <property type="entry name" value="PTS_EIIB-like_sf"/>
</dbReference>
<dbReference type="InterPro" id="IPR013011">
    <property type="entry name" value="PTS_EIIB_2"/>
</dbReference>
<dbReference type="InterPro" id="IPR003501">
    <property type="entry name" value="PTS_EIIB_2/3"/>
</dbReference>
<dbReference type="Pfam" id="PF02302">
    <property type="entry name" value="PTS_IIB"/>
    <property type="match status" value="1"/>
</dbReference>
<dbReference type="SUPFAM" id="SSF52794">
    <property type="entry name" value="PTS system IIB component-like"/>
    <property type="match status" value="1"/>
</dbReference>
<dbReference type="PROSITE" id="PS51099">
    <property type="entry name" value="PTS_EIIB_TYPE_2"/>
    <property type="match status" value="1"/>
</dbReference>